<comment type="function">
    <text evidence="1">F(1)F(0) ATP synthase produces ATP from ADP in the presence of a proton or sodium gradient. F-type ATPases consist of two structural domains, F(1) containing the extramembraneous catalytic core and F(0) containing the membrane proton channel, linked together by a central stalk and a peripheral stalk. During catalysis, ATP synthesis in the catalytic domain of F(1) is coupled via a rotary mechanism of the central stalk subunits to proton translocation.</text>
</comment>
<comment type="function">
    <text evidence="1">Component of the F(0) channel, it forms part of the peripheral stalk, linking F(1) to F(0).</text>
</comment>
<comment type="subunit">
    <text evidence="1">F-type ATPases have 2 components, F(1) - the catalytic core - and F(0) - the membrane proton channel. F(1) has five subunits: alpha(3), beta(3), gamma(1), delta(1), epsilon(1). F(0) has three main subunits: a(1), b(2) and c(10-14). The alpha and beta chains form an alternating ring which encloses part of the gamma chain. F(1) is attached to F(0) by a central stalk formed by the gamma and epsilon chains, while a peripheral stalk is formed by the delta and b chains.</text>
</comment>
<comment type="subcellular location">
    <subcellularLocation>
        <location evidence="1">Cell inner membrane</location>
        <topology evidence="1">Single-pass membrane protein</topology>
    </subcellularLocation>
</comment>
<comment type="similarity">
    <text evidence="1">Belongs to the ATPase B chain family.</text>
</comment>
<evidence type="ECO:0000255" key="1">
    <source>
        <dbReference type="HAMAP-Rule" id="MF_01398"/>
    </source>
</evidence>
<keyword id="KW-0066">ATP synthesis</keyword>
<keyword id="KW-0997">Cell inner membrane</keyword>
<keyword id="KW-1003">Cell membrane</keyword>
<keyword id="KW-0138">CF(0)</keyword>
<keyword id="KW-0375">Hydrogen ion transport</keyword>
<keyword id="KW-0406">Ion transport</keyword>
<keyword id="KW-0472">Membrane</keyword>
<keyword id="KW-0812">Transmembrane</keyword>
<keyword id="KW-1133">Transmembrane helix</keyword>
<keyword id="KW-0813">Transport</keyword>
<dbReference type="EMBL" id="CP000948">
    <property type="protein sequence ID" value="ACB04779.1"/>
    <property type="molecule type" value="Genomic_DNA"/>
</dbReference>
<dbReference type="RefSeq" id="WP_001052219.1">
    <property type="nucleotide sequence ID" value="NC_010473.1"/>
</dbReference>
<dbReference type="SMR" id="B1X9W4"/>
<dbReference type="GeneID" id="93778231"/>
<dbReference type="KEGG" id="ecd:ECDH10B_3923"/>
<dbReference type="HOGENOM" id="CLU_079215_4_5_6"/>
<dbReference type="GO" id="GO:0005886">
    <property type="term" value="C:plasma membrane"/>
    <property type="evidence" value="ECO:0007669"/>
    <property type="project" value="UniProtKB-SubCell"/>
</dbReference>
<dbReference type="GO" id="GO:0045259">
    <property type="term" value="C:proton-transporting ATP synthase complex"/>
    <property type="evidence" value="ECO:0007669"/>
    <property type="project" value="UniProtKB-KW"/>
</dbReference>
<dbReference type="GO" id="GO:0046933">
    <property type="term" value="F:proton-transporting ATP synthase activity, rotational mechanism"/>
    <property type="evidence" value="ECO:0007669"/>
    <property type="project" value="UniProtKB-UniRule"/>
</dbReference>
<dbReference type="GO" id="GO:0046961">
    <property type="term" value="F:proton-transporting ATPase activity, rotational mechanism"/>
    <property type="evidence" value="ECO:0007669"/>
    <property type="project" value="TreeGrafter"/>
</dbReference>
<dbReference type="CDD" id="cd06503">
    <property type="entry name" value="ATP-synt_Fo_b"/>
    <property type="match status" value="1"/>
</dbReference>
<dbReference type="FunFam" id="1.20.5.620:FF:000001">
    <property type="entry name" value="ATP synthase subunit b"/>
    <property type="match status" value="1"/>
</dbReference>
<dbReference type="Gene3D" id="1.20.5.620">
    <property type="entry name" value="F1F0 ATP synthase subunit B, membrane domain"/>
    <property type="match status" value="1"/>
</dbReference>
<dbReference type="HAMAP" id="MF_01398">
    <property type="entry name" value="ATP_synth_b_bprime"/>
    <property type="match status" value="1"/>
</dbReference>
<dbReference type="InterPro" id="IPR028987">
    <property type="entry name" value="ATP_synth_B-like_membr_sf"/>
</dbReference>
<dbReference type="InterPro" id="IPR002146">
    <property type="entry name" value="ATP_synth_b/b'su_bac/chlpt"/>
</dbReference>
<dbReference type="InterPro" id="IPR005864">
    <property type="entry name" value="ATP_synth_F0_bsu_bac"/>
</dbReference>
<dbReference type="InterPro" id="IPR050059">
    <property type="entry name" value="ATP_synthase_B_chain"/>
</dbReference>
<dbReference type="NCBIfam" id="TIGR01144">
    <property type="entry name" value="ATP_synt_b"/>
    <property type="match status" value="1"/>
</dbReference>
<dbReference type="NCBIfam" id="NF004411">
    <property type="entry name" value="PRK05759.1-2"/>
    <property type="match status" value="1"/>
</dbReference>
<dbReference type="NCBIfam" id="NF004413">
    <property type="entry name" value="PRK05759.1-4"/>
    <property type="match status" value="1"/>
</dbReference>
<dbReference type="PANTHER" id="PTHR33445:SF1">
    <property type="entry name" value="ATP SYNTHASE SUBUNIT B"/>
    <property type="match status" value="1"/>
</dbReference>
<dbReference type="PANTHER" id="PTHR33445">
    <property type="entry name" value="ATP SYNTHASE SUBUNIT B', CHLOROPLASTIC"/>
    <property type="match status" value="1"/>
</dbReference>
<dbReference type="Pfam" id="PF00430">
    <property type="entry name" value="ATP-synt_B"/>
    <property type="match status" value="1"/>
</dbReference>
<dbReference type="SUPFAM" id="SSF81573">
    <property type="entry name" value="F1F0 ATP synthase subunit B, membrane domain"/>
    <property type="match status" value="1"/>
</dbReference>
<gene>
    <name evidence="1" type="primary">atpF</name>
    <name type="ordered locus">ECDH10B_3923</name>
</gene>
<accession>B1X9W4</accession>
<sequence length="156" mass="17264">MNLNATILGQAIAFVLFVLFCMKYVWPPLMAAIEKRQKEIADGLASAERAHKDLDLAKASATDQLKKAKAEAQVIIEQANKRRSQILDEAKAEAEQERTKIVAQAQAEIEAERKRAREELRKQVAILAVAGAEKIIERSVDEAANSDIVDKLVAEL</sequence>
<name>ATPF_ECODH</name>
<feature type="chain" id="PRO_0000368474" description="ATP synthase subunit b">
    <location>
        <begin position="1"/>
        <end position="156"/>
    </location>
</feature>
<feature type="transmembrane region" description="Helical" evidence="1">
    <location>
        <begin position="11"/>
        <end position="31"/>
    </location>
</feature>
<proteinExistence type="inferred from homology"/>
<reference key="1">
    <citation type="journal article" date="2008" name="J. Bacteriol.">
        <title>The complete genome sequence of Escherichia coli DH10B: insights into the biology of a laboratory workhorse.</title>
        <authorList>
            <person name="Durfee T."/>
            <person name="Nelson R."/>
            <person name="Baldwin S."/>
            <person name="Plunkett G. III"/>
            <person name="Burland V."/>
            <person name="Mau B."/>
            <person name="Petrosino J.F."/>
            <person name="Qin X."/>
            <person name="Muzny D.M."/>
            <person name="Ayele M."/>
            <person name="Gibbs R.A."/>
            <person name="Csorgo B."/>
            <person name="Posfai G."/>
            <person name="Weinstock G.M."/>
            <person name="Blattner F.R."/>
        </authorList>
    </citation>
    <scope>NUCLEOTIDE SEQUENCE [LARGE SCALE GENOMIC DNA]</scope>
    <source>
        <strain>K12 / DH10B</strain>
    </source>
</reference>
<organism>
    <name type="scientific">Escherichia coli (strain K12 / DH10B)</name>
    <dbReference type="NCBI Taxonomy" id="316385"/>
    <lineage>
        <taxon>Bacteria</taxon>
        <taxon>Pseudomonadati</taxon>
        <taxon>Pseudomonadota</taxon>
        <taxon>Gammaproteobacteria</taxon>
        <taxon>Enterobacterales</taxon>
        <taxon>Enterobacteriaceae</taxon>
        <taxon>Escherichia</taxon>
    </lineage>
</organism>
<protein>
    <recommendedName>
        <fullName evidence="1">ATP synthase subunit b</fullName>
    </recommendedName>
    <alternativeName>
        <fullName evidence="1">ATP synthase F(0) sector subunit b</fullName>
    </alternativeName>
    <alternativeName>
        <fullName evidence="1">ATPase subunit I</fullName>
    </alternativeName>
    <alternativeName>
        <fullName evidence="1">F-type ATPase subunit b</fullName>
        <shortName evidence="1">F-ATPase subunit b</shortName>
    </alternativeName>
</protein>